<comment type="function">
    <text evidence="1 2">E3 ubiquitin ligase catalyzing the covalent attachment of ubiquitin moieties onto substrate proteins (By similarity). Inhibits neurogenesis and axis formation during embryonic development by modulating the phosphatidylinositol 3-kinase (PI3K) pathway. Acts downstream of PI3K and akt1 to up-regulate gsk3b mRNA expression.</text>
</comment>
<comment type="catalytic activity">
    <reaction evidence="2">
        <text>S-ubiquitinyl-[E2 ubiquitin-conjugating enzyme]-L-cysteine + [acceptor protein]-L-lysine = [E2 ubiquitin-conjugating enzyme]-L-cysteine + N(6)-ubiquitinyl-[acceptor protein]-L-lysine.</text>
        <dbReference type="EC" id="2.3.2.27"/>
    </reaction>
</comment>
<comment type="pathway">
    <text>Protein modification; protein ubiquitination.</text>
</comment>
<comment type="subcellular location">
    <subcellularLocation>
        <location evidence="2">Cytoplasm</location>
    </subcellularLocation>
    <subcellularLocation>
        <location evidence="2">Nucleus</location>
    </subcellularLocation>
</comment>
<comment type="caution">
    <text evidence="6">Although the makorin-type Cys-His region lacks the final His residue, the following Asp residue may be able to coordinate Zn(2+).</text>
</comment>
<organism>
    <name type="scientific">Takifugu rubripes</name>
    <name type="common">Japanese pufferfish</name>
    <name type="synonym">Fugu rubripes</name>
    <dbReference type="NCBI Taxonomy" id="31033"/>
    <lineage>
        <taxon>Eukaryota</taxon>
        <taxon>Metazoa</taxon>
        <taxon>Chordata</taxon>
        <taxon>Craniata</taxon>
        <taxon>Vertebrata</taxon>
        <taxon>Euteleostomi</taxon>
        <taxon>Actinopterygii</taxon>
        <taxon>Neopterygii</taxon>
        <taxon>Teleostei</taxon>
        <taxon>Neoteleostei</taxon>
        <taxon>Acanthomorphata</taxon>
        <taxon>Eupercaria</taxon>
        <taxon>Tetraodontiformes</taxon>
        <taxon>Tetradontoidea</taxon>
        <taxon>Tetraodontidae</taxon>
        <taxon>Takifugu</taxon>
    </lineage>
</organism>
<dbReference type="EC" id="2.3.2.27" evidence="2"/>
<dbReference type="EMBL" id="AB182270">
    <property type="protein sequence ID" value="BAD80900.1"/>
    <property type="molecule type" value="mRNA"/>
</dbReference>
<dbReference type="RefSeq" id="NP_001072101.1">
    <property type="nucleotide sequence ID" value="NM_001078633.1"/>
</dbReference>
<dbReference type="FunCoup" id="Q5NU13">
    <property type="interactions" value="978"/>
</dbReference>
<dbReference type="STRING" id="31033.ENSTRUP00000072021"/>
<dbReference type="GeneID" id="778013"/>
<dbReference type="KEGG" id="tru:778013"/>
<dbReference type="CTD" id="23609"/>
<dbReference type="eggNOG" id="KOG1039">
    <property type="taxonomic scope" value="Eukaryota"/>
</dbReference>
<dbReference type="InParanoid" id="Q5NU13"/>
<dbReference type="OrthoDB" id="411372at2759"/>
<dbReference type="UniPathway" id="UPA00143"/>
<dbReference type="Proteomes" id="UP000005226">
    <property type="component" value="Unplaced"/>
</dbReference>
<dbReference type="GO" id="GO:0005737">
    <property type="term" value="C:cytoplasm"/>
    <property type="evidence" value="ECO:0007669"/>
    <property type="project" value="UniProtKB-SubCell"/>
</dbReference>
<dbReference type="GO" id="GO:0005634">
    <property type="term" value="C:nucleus"/>
    <property type="evidence" value="ECO:0007669"/>
    <property type="project" value="UniProtKB-SubCell"/>
</dbReference>
<dbReference type="GO" id="GO:0061630">
    <property type="term" value="F:ubiquitin protein ligase activity"/>
    <property type="evidence" value="ECO:0007669"/>
    <property type="project" value="InterPro"/>
</dbReference>
<dbReference type="GO" id="GO:0008270">
    <property type="term" value="F:zinc ion binding"/>
    <property type="evidence" value="ECO:0007669"/>
    <property type="project" value="UniProtKB-KW"/>
</dbReference>
<dbReference type="GO" id="GO:0030154">
    <property type="term" value="P:cell differentiation"/>
    <property type="evidence" value="ECO:0007669"/>
    <property type="project" value="UniProtKB-KW"/>
</dbReference>
<dbReference type="GO" id="GO:0007399">
    <property type="term" value="P:nervous system development"/>
    <property type="evidence" value="ECO:0007669"/>
    <property type="project" value="UniProtKB-KW"/>
</dbReference>
<dbReference type="GO" id="GO:0000209">
    <property type="term" value="P:protein polyubiquitination"/>
    <property type="evidence" value="ECO:0007669"/>
    <property type="project" value="InterPro"/>
</dbReference>
<dbReference type="FunFam" id="3.30.40.10:FF:000117">
    <property type="entry name" value="Probable E3 ubiquitin-protein ligase makorin-1"/>
    <property type="match status" value="1"/>
</dbReference>
<dbReference type="Gene3D" id="1.20.120.1350">
    <property type="entry name" value="Pneumovirus matrix protein 2 (M2), zinc-binding domain"/>
    <property type="match status" value="1"/>
</dbReference>
<dbReference type="Gene3D" id="4.10.1000.10">
    <property type="entry name" value="Zinc finger, CCCH-type"/>
    <property type="match status" value="1"/>
</dbReference>
<dbReference type="Gene3D" id="3.30.40.10">
    <property type="entry name" value="Zinc/RING finger domain, C3HC4 (zinc finger)"/>
    <property type="match status" value="1"/>
</dbReference>
<dbReference type="InterPro" id="IPR045072">
    <property type="entry name" value="MKRN-like"/>
</dbReference>
<dbReference type="InterPro" id="IPR041686">
    <property type="entry name" value="Znf-CCCH_3"/>
</dbReference>
<dbReference type="InterPro" id="IPR000571">
    <property type="entry name" value="Znf_CCCH"/>
</dbReference>
<dbReference type="InterPro" id="IPR036855">
    <property type="entry name" value="Znf_CCCH_sf"/>
</dbReference>
<dbReference type="InterPro" id="IPR001841">
    <property type="entry name" value="Znf_RING"/>
</dbReference>
<dbReference type="InterPro" id="IPR013083">
    <property type="entry name" value="Znf_RING/FYVE/PHD"/>
</dbReference>
<dbReference type="InterPro" id="IPR017907">
    <property type="entry name" value="Znf_RING_CS"/>
</dbReference>
<dbReference type="PANTHER" id="PTHR11224:SF17">
    <property type="entry name" value="E3 UBIQUITIN-PROTEIN LIGASE MAKORIN-2"/>
    <property type="match status" value="1"/>
</dbReference>
<dbReference type="PANTHER" id="PTHR11224">
    <property type="entry name" value="MAKORIN-RELATED"/>
    <property type="match status" value="1"/>
</dbReference>
<dbReference type="Pfam" id="PF00642">
    <property type="entry name" value="zf-CCCH"/>
    <property type="match status" value="1"/>
</dbReference>
<dbReference type="Pfam" id="PF14608">
    <property type="entry name" value="zf-CCCH_2"/>
    <property type="match status" value="1"/>
</dbReference>
<dbReference type="Pfam" id="PF15663">
    <property type="entry name" value="zf-CCCH_3"/>
    <property type="match status" value="1"/>
</dbReference>
<dbReference type="SMART" id="SM00184">
    <property type="entry name" value="RING"/>
    <property type="match status" value="1"/>
</dbReference>
<dbReference type="SMART" id="SM00356">
    <property type="entry name" value="ZnF_C3H1"/>
    <property type="match status" value="4"/>
</dbReference>
<dbReference type="SUPFAM" id="SSF90229">
    <property type="entry name" value="CCCH zinc finger"/>
    <property type="match status" value="2"/>
</dbReference>
<dbReference type="SUPFAM" id="SSF57850">
    <property type="entry name" value="RING/U-box"/>
    <property type="match status" value="1"/>
</dbReference>
<dbReference type="PROSITE" id="PS50103">
    <property type="entry name" value="ZF_C3H1"/>
    <property type="match status" value="4"/>
</dbReference>
<dbReference type="PROSITE" id="PS00518">
    <property type="entry name" value="ZF_RING_1"/>
    <property type="match status" value="1"/>
</dbReference>
<dbReference type="PROSITE" id="PS50089">
    <property type="entry name" value="ZF_RING_2"/>
    <property type="match status" value="1"/>
</dbReference>
<evidence type="ECO:0000250" key="1">
    <source>
        <dbReference type="UniProtKB" id="B0F0H3"/>
    </source>
</evidence>
<evidence type="ECO:0000250" key="2">
    <source>
        <dbReference type="UniProtKB" id="Q9ERV1"/>
    </source>
</evidence>
<evidence type="ECO:0000255" key="3"/>
<evidence type="ECO:0000255" key="4">
    <source>
        <dbReference type="PROSITE-ProRule" id="PRU00175"/>
    </source>
</evidence>
<evidence type="ECO:0000255" key="5">
    <source>
        <dbReference type="PROSITE-ProRule" id="PRU00723"/>
    </source>
</evidence>
<evidence type="ECO:0000305" key="6"/>
<evidence type="ECO:0000312" key="7">
    <source>
        <dbReference type="EMBL" id="BAD80900.1"/>
    </source>
</evidence>
<feature type="chain" id="PRO_0000361048" description="E3 ubiquitin-protein ligase makorin-2">
    <location>
        <begin position="1"/>
        <end position="402"/>
    </location>
</feature>
<feature type="zinc finger region" description="C3H1-type 1" evidence="5">
    <location>
        <begin position="2"/>
        <end position="29"/>
    </location>
</feature>
<feature type="zinc finger region" description="C3H1-type 2" evidence="5">
    <location>
        <begin position="31"/>
        <end position="58"/>
    </location>
</feature>
<feature type="zinc finger region" description="C3H1-type 3" evidence="5">
    <location>
        <begin position="141"/>
        <end position="168"/>
    </location>
</feature>
<feature type="zinc finger region" description="RING-type" evidence="4">
    <location>
        <begin position="214"/>
        <end position="268"/>
    </location>
</feature>
<feature type="zinc finger region" description="C3H1-type 4" evidence="5">
    <location>
        <begin position="297"/>
        <end position="326"/>
    </location>
</feature>
<feature type="region of interest" description="Makorin-type Cys-His" evidence="3">
    <location>
        <begin position="169"/>
        <end position="198"/>
    </location>
</feature>
<reference key="1">
    <citation type="submission" date="2004-06" db="EMBL/GenBank/DDBJ databases">
        <title>Takifugu rubripes mRNA for MKRN2, complete CDS.</title>
        <authorList>
            <person name="Abe S."/>
            <person name="Kobayashi Y."/>
        </authorList>
    </citation>
    <scope>NUCLEOTIDE SEQUENCE [MRNA]</scope>
    <source>
        <tissue evidence="7">Ovary</tissue>
    </source>
</reference>
<gene>
    <name evidence="7" type="primary">mkrn2</name>
</gene>
<accession>Q5NU13</accession>
<name>MKRN2_TAKRU</name>
<protein>
    <recommendedName>
        <fullName>E3 ubiquitin-protein ligase makorin-2</fullName>
        <ecNumber evidence="2">2.3.2.27</ecNumber>
    </recommendedName>
    <alternativeName>
        <fullName evidence="6">RING-type E3 ubiquitin transferase makorin-2</fullName>
    </alternativeName>
</protein>
<keyword id="KW-0963">Cytoplasm</keyword>
<keyword id="KW-0217">Developmental protein</keyword>
<keyword id="KW-0221">Differentiation</keyword>
<keyword id="KW-0479">Metal-binding</keyword>
<keyword id="KW-0524">Neurogenesis</keyword>
<keyword id="KW-0539">Nucleus</keyword>
<keyword id="KW-1185">Reference proteome</keyword>
<keyword id="KW-0677">Repeat</keyword>
<keyword id="KW-0804">Transcription</keyword>
<keyword id="KW-0805">Transcription regulation</keyword>
<keyword id="KW-0808">Transferase</keyword>
<keyword id="KW-0833">Ubl conjugation pathway</keyword>
<keyword id="KW-0862">Zinc</keyword>
<keyword id="KW-0863">Zinc-finger</keyword>
<proteinExistence type="evidence at transcript level"/>
<sequence>MTTKQVTCRYFLHGVCREGNHCQFSHDPSSSKPSTICKFYQRGTCAYGERCRYDHVKLSSRGGGAFDMAGVGGARDGASTRGAAKKTFVHQERENMFRAPAESFGADVMAPAPHTYVDAIRTGLSSSSQDHTPPTMAGVNQDLPRLCPYAAVGHCYYEENCIYLHGDKCEVCGLQVLDPHNPEQRSMHEKMCLLAFEADMEKAFAVQLSQEKVCSICMEVVVQKMNPSDRRFGILSSCCHVFCLACIRKWRCTRNFSNKIIKSCPECRVASEFVIPSVYWEENQEDKVHLIELFKSGVGKKPCKYFDQGRGSCPFGGKCLYLHALPDGSRAEPEQPRKQLGSEGNIRFMNSVRLWDFIEEREQHSAPPLQAFADDISELRELFVQMSGPSPDEGESQSRSAP</sequence>